<reference key="1">
    <citation type="journal article" date="2007" name="Proc. Natl. Acad. Sci. U.S.A.">
        <title>Genome sequencing reveals complex secondary metabolome in the marine actinomycete Salinispora tropica.</title>
        <authorList>
            <person name="Udwary D.W."/>
            <person name="Zeigler L."/>
            <person name="Asolkar R.N."/>
            <person name="Singan V."/>
            <person name="Lapidus A."/>
            <person name="Fenical W."/>
            <person name="Jensen P.R."/>
            <person name="Moore B.S."/>
        </authorList>
    </citation>
    <scope>NUCLEOTIDE SEQUENCE [LARGE SCALE GENOMIC DNA]</scope>
    <source>
        <strain>ATCC BAA-916 / DSM 44818 / JCM 13857 / NBRC 105044 / CNB-440</strain>
    </source>
</reference>
<comment type="function">
    <text evidence="1">Succinyl-CoA synthetase functions in the citric acid cycle (TCA), coupling the hydrolysis of succinyl-CoA to the synthesis of either ATP or GTP and thus represents the only step of substrate-level phosphorylation in the TCA. The beta subunit provides nucleotide specificity of the enzyme and binds the substrate succinate, while the binding sites for coenzyme A and phosphate are found in the alpha subunit.</text>
</comment>
<comment type="catalytic activity">
    <reaction evidence="1">
        <text>succinate + ATP + CoA = succinyl-CoA + ADP + phosphate</text>
        <dbReference type="Rhea" id="RHEA:17661"/>
        <dbReference type="ChEBI" id="CHEBI:30031"/>
        <dbReference type="ChEBI" id="CHEBI:30616"/>
        <dbReference type="ChEBI" id="CHEBI:43474"/>
        <dbReference type="ChEBI" id="CHEBI:57287"/>
        <dbReference type="ChEBI" id="CHEBI:57292"/>
        <dbReference type="ChEBI" id="CHEBI:456216"/>
        <dbReference type="EC" id="6.2.1.5"/>
    </reaction>
    <physiologicalReaction direction="right-to-left" evidence="1">
        <dbReference type="Rhea" id="RHEA:17663"/>
    </physiologicalReaction>
</comment>
<comment type="catalytic activity">
    <reaction evidence="1">
        <text>GTP + succinate + CoA = succinyl-CoA + GDP + phosphate</text>
        <dbReference type="Rhea" id="RHEA:22120"/>
        <dbReference type="ChEBI" id="CHEBI:30031"/>
        <dbReference type="ChEBI" id="CHEBI:37565"/>
        <dbReference type="ChEBI" id="CHEBI:43474"/>
        <dbReference type="ChEBI" id="CHEBI:57287"/>
        <dbReference type="ChEBI" id="CHEBI:57292"/>
        <dbReference type="ChEBI" id="CHEBI:58189"/>
    </reaction>
    <physiologicalReaction direction="right-to-left" evidence="1">
        <dbReference type="Rhea" id="RHEA:22122"/>
    </physiologicalReaction>
</comment>
<comment type="cofactor">
    <cofactor evidence="1">
        <name>Mg(2+)</name>
        <dbReference type="ChEBI" id="CHEBI:18420"/>
    </cofactor>
    <text evidence="1">Binds 1 Mg(2+) ion per subunit.</text>
</comment>
<comment type="pathway">
    <text evidence="1">Carbohydrate metabolism; tricarboxylic acid cycle; succinate from succinyl-CoA (ligase route): step 1/1.</text>
</comment>
<comment type="subunit">
    <text evidence="1">Heterotetramer of two alpha and two beta subunits.</text>
</comment>
<comment type="similarity">
    <text evidence="1">Belongs to the succinate/malate CoA ligase beta subunit family.</text>
</comment>
<gene>
    <name evidence="1" type="primary">sucC</name>
    <name type="ordered locus">Strop_3813</name>
</gene>
<sequence length="392" mass="40939">MDLYEYQGRDLFERHGLPVLAGGVATTPEEARAIAERLGGRVVVKAQVKVGGRGKAGGVKLTEGAEETVARATDILGMDIKGHTVHKVMITVTADVAEEYYFSYLLDRANRTFLCIASVAGGMDIEQVAAETPEKVVKEPIDANTGVDVATARRIVTQAGFPAEVADQTVEIAVDLWKAFVAEDATLVEVNPLAKTAEGGLLLLDAKVSLDENAAFRHPDHEALVDQAAVDPLEQAAKEKDLNYVKLDGEVGIIGNGAGLVMSTLDVVAYAGERHGGVKPANFLDIGGGASAAVMANGLEIVLSDPAVKSVFVNVFGGITACDAVANGIVQALALLEQRGEKVTRPLVVRLDGNNAEAGRAILDGANNPLIQRVDTMDGAAERAAELAAAGV</sequence>
<protein>
    <recommendedName>
        <fullName evidence="1">Succinate--CoA ligase [ADP-forming] subunit beta</fullName>
        <ecNumber evidence="1">6.2.1.5</ecNumber>
    </recommendedName>
    <alternativeName>
        <fullName evidence="1">Succinyl-CoA synthetase subunit beta</fullName>
        <shortName evidence="1">SCS-beta</shortName>
    </alternativeName>
</protein>
<feature type="chain" id="PRO_1000082215" description="Succinate--CoA ligase [ADP-forming] subunit beta">
    <location>
        <begin position="1"/>
        <end position="392"/>
    </location>
</feature>
<feature type="domain" description="ATP-grasp" evidence="1">
    <location>
        <begin position="9"/>
        <end position="236"/>
    </location>
</feature>
<feature type="binding site" evidence="1">
    <location>
        <position position="45"/>
    </location>
    <ligand>
        <name>ATP</name>
        <dbReference type="ChEBI" id="CHEBI:30616"/>
    </ligand>
</feature>
<feature type="binding site" evidence="1">
    <location>
        <begin position="52"/>
        <end position="54"/>
    </location>
    <ligand>
        <name>ATP</name>
        <dbReference type="ChEBI" id="CHEBI:30616"/>
    </ligand>
</feature>
<feature type="binding site" evidence="1">
    <location>
        <position position="94"/>
    </location>
    <ligand>
        <name>ATP</name>
        <dbReference type="ChEBI" id="CHEBI:30616"/>
    </ligand>
</feature>
<feature type="binding site" evidence="1">
    <location>
        <position position="99"/>
    </location>
    <ligand>
        <name>ATP</name>
        <dbReference type="ChEBI" id="CHEBI:30616"/>
    </ligand>
</feature>
<feature type="binding site" evidence="1">
    <location>
        <position position="191"/>
    </location>
    <ligand>
        <name>Mg(2+)</name>
        <dbReference type="ChEBI" id="CHEBI:18420"/>
    </ligand>
</feature>
<feature type="binding site" evidence="1">
    <location>
        <position position="205"/>
    </location>
    <ligand>
        <name>Mg(2+)</name>
        <dbReference type="ChEBI" id="CHEBI:18420"/>
    </ligand>
</feature>
<feature type="binding site" evidence="1">
    <location>
        <position position="256"/>
    </location>
    <ligand>
        <name>substrate</name>
        <note>ligand shared with subunit alpha</note>
    </ligand>
</feature>
<feature type="binding site" evidence="1">
    <location>
        <begin position="318"/>
        <end position="320"/>
    </location>
    <ligand>
        <name>substrate</name>
        <note>ligand shared with subunit alpha</note>
    </ligand>
</feature>
<keyword id="KW-0067">ATP-binding</keyword>
<keyword id="KW-0436">Ligase</keyword>
<keyword id="KW-0460">Magnesium</keyword>
<keyword id="KW-0479">Metal-binding</keyword>
<keyword id="KW-0547">Nucleotide-binding</keyword>
<keyword id="KW-1185">Reference proteome</keyword>
<keyword id="KW-0816">Tricarboxylic acid cycle</keyword>
<evidence type="ECO:0000255" key="1">
    <source>
        <dbReference type="HAMAP-Rule" id="MF_00558"/>
    </source>
</evidence>
<name>SUCC_SALTO</name>
<organism>
    <name type="scientific">Salinispora tropica (strain ATCC BAA-916 / DSM 44818 / JCM 13857 / NBRC 105044 / CNB-440)</name>
    <dbReference type="NCBI Taxonomy" id="369723"/>
    <lineage>
        <taxon>Bacteria</taxon>
        <taxon>Bacillati</taxon>
        <taxon>Actinomycetota</taxon>
        <taxon>Actinomycetes</taxon>
        <taxon>Micromonosporales</taxon>
        <taxon>Micromonosporaceae</taxon>
        <taxon>Salinispora</taxon>
    </lineage>
</organism>
<dbReference type="EC" id="6.2.1.5" evidence="1"/>
<dbReference type="EMBL" id="CP000667">
    <property type="protein sequence ID" value="ABP56244.1"/>
    <property type="molecule type" value="Genomic_DNA"/>
</dbReference>
<dbReference type="RefSeq" id="WP_012015019.1">
    <property type="nucleotide sequence ID" value="NC_009380.1"/>
</dbReference>
<dbReference type="SMR" id="A4XBE5"/>
<dbReference type="STRING" id="369723.Strop_3813"/>
<dbReference type="KEGG" id="stp:Strop_3813"/>
<dbReference type="PATRIC" id="fig|369723.5.peg.3936"/>
<dbReference type="eggNOG" id="COG0045">
    <property type="taxonomic scope" value="Bacteria"/>
</dbReference>
<dbReference type="HOGENOM" id="CLU_037430_0_2_11"/>
<dbReference type="UniPathway" id="UPA00223">
    <property type="reaction ID" value="UER00999"/>
</dbReference>
<dbReference type="Proteomes" id="UP000000235">
    <property type="component" value="Chromosome"/>
</dbReference>
<dbReference type="GO" id="GO:0005829">
    <property type="term" value="C:cytosol"/>
    <property type="evidence" value="ECO:0007669"/>
    <property type="project" value="TreeGrafter"/>
</dbReference>
<dbReference type="GO" id="GO:0042709">
    <property type="term" value="C:succinate-CoA ligase complex"/>
    <property type="evidence" value="ECO:0007669"/>
    <property type="project" value="TreeGrafter"/>
</dbReference>
<dbReference type="GO" id="GO:0005524">
    <property type="term" value="F:ATP binding"/>
    <property type="evidence" value="ECO:0007669"/>
    <property type="project" value="UniProtKB-UniRule"/>
</dbReference>
<dbReference type="GO" id="GO:0000287">
    <property type="term" value="F:magnesium ion binding"/>
    <property type="evidence" value="ECO:0007669"/>
    <property type="project" value="UniProtKB-UniRule"/>
</dbReference>
<dbReference type="GO" id="GO:0004775">
    <property type="term" value="F:succinate-CoA ligase (ADP-forming) activity"/>
    <property type="evidence" value="ECO:0007669"/>
    <property type="project" value="UniProtKB-UniRule"/>
</dbReference>
<dbReference type="GO" id="GO:0004776">
    <property type="term" value="F:succinate-CoA ligase (GDP-forming) activity"/>
    <property type="evidence" value="ECO:0007669"/>
    <property type="project" value="RHEA"/>
</dbReference>
<dbReference type="GO" id="GO:0006104">
    <property type="term" value="P:succinyl-CoA metabolic process"/>
    <property type="evidence" value="ECO:0007669"/>
    <property type="project" value="TreeGrafter"/>
</dbReference>
<dbReference type="GO" id="GO:0006099">
    <property type="term" value="P:tricarboxylic acid cycle"/>
    <property type="evidence" value="ECO:0007669"/>
    <property type="project" value="UniProtKB-UniRule"/>
</dbReference>
<dbReference type="FunFam" id="3.30.1490.20:FF:000014">
    <property type="entry name" value="Succinate--CoA ligase [ADP-forming] subunit beta"/>
    <property type="match status" value="1"/>
</dbReference>
<dbReference type="FunFam" id="3.30.470.20:FF:000002">
    <property type="entry name" value="Succinate--CoA ligase [ADP-forming] subunit beta"/>
    <property type="match status" value="1"/>
</dbReference>
<dbReference type="FunFam" id="3.40.50.261:FF:000007">
    <property type="entry name" value="Succinate--CoA ligase [ADP-forming] subunit beta"/>
    <property type="match status" value="1"/>
</dbReference>
<dbReference type="Gene3D" id="3.30.1490.20">
    <property type="entry name" value="ATP-grasp fold, A domain"/>
    <property type="match status" value="1"/>
</dbReference>
<dbReference type="Gene3D" id="3.30.470.20">
    <property type="entry name" value="ATP-grasp fold, B domain"/>
    <property type="match status" value="1"/>
</dbReference>
<dbReference type="Gene3D" id="3.40.50.261">
    <property type="entry name" value="Succinyl-CoA synthetase domains"/>
    <property type="match status" value="1"/>
</dbReference>
<dbReference type="HAMAP" id="MF_00558">
    <property type="entry name" value="Succ_CoA_beta"/>
    <property type="match status" value="1"/>
</dbReference>
<dbReference type="InterPro" id="IPR011761">
    <property type="entry name" value="ATP-grasp"/>
</dbReference>
<dbReference type="InterPro" id="IPR013650">
    <property type="entry name" value="ATP-grasp_succ-CoA_synth-type"/>
</dbReference>
<dbReference type="InterPro" id="IPR013815">
    <property type="entry name" value="ATP_grasp_subdomain_1"/>
</dbReference>
<dbReference type="InterPro" id="IPR017866">
    <property type="entry name" value="Succ-CoA_synthase_bsu_CS"/>
</dbReference>
<dbReference type="InterPro" id="IPR005811">
    <property type="entry name" value="SUCC_ACL_C"/>
</dbReference>
<dbReference type="InterPro" id="IPR005809">
    <property type="entry name" value="Succ_CoA_ligase-like_bsu"/>
</dbReference>
<dbReference type="InterPro" id="IPR016102">
    <property type="entry name" value="Succinyl-CoA_synth-like"/>
</dbReference>
<dbReference type="NCBIfam" id="NF001913">
    <property type="entry name" value="PRK00696.1"/>
    <property type="match status" value="1"/>
</dbReference>
<dbReference type="NCBIfam" id="TIGR01016">
    <property type="entry name" value="sucCoAbeta"/>
    <property type="match status" value="1"/>
</dbReference>
<dbReference type="PANTHER" id="PTHR11815:SF10">
    <property type="entry name" value="SUCCINATE--COA LIGASE [GDP-FORMING] SUBUNIT BETA, MITOCHONDRIAL"/>
    <property type="match status" value="1"/>
</dbReference>
<dbReference type="PANTHER" id="PTHR11815">
    <property type="entry name" value="SUCCINYL-COA SYNTHETASE BETA CHAIN"/>
    <property type="match status" value="1"/>
</dbReference>
<dbReference type="Pfam" id="PF08442">
    <property type="entry name" value="ATP-grasp_2"/>
    <property type="match status" value="1"/>
</dbReference>
<dbReference type="Pfam" id="PF00549">
    <property type="entry name" value="Ligase_CoA"/>
    <property type="match status" value="1"/>
</dbReference>
<dbReference type="PIRSF" id="PIRSF001554">
    <property type="entry name" value="SucCS_beta"/>
    <property type="match status" value="1"/>
</dbReference>
<dbReference type="SUPFAM" id="SSF56059">
    <property type="entry name" value="Glutathione synthetase ATP-binding domain-like"/>
    <property type="match status" value="1"/>
</dbReference>
<dbReference type="SUPFAM" id="SSF52210">
    <property type="entry name" value="Succinyl-CoA synthetase domains"/>
    <property type="match status" value="1"/>
</dbReference>
<dbReference type="PROSITE" id="PS50975">
    <property type="entry name" value="ATP_GRASP"/>
    <property type="match status" value="1"/>
</dbReference>
<dbReference type="PROSITE" id="PS01217">
    <property type="entry name" value="SUCCINYL_COA_LIG_3"/>
    <property type="match status" value="1"/>
</dbReference>
<proteinExistence type="inferred from homology"/>
<accession>A4XBE5</accession>